<keyword id="KW-0678">Repressor</keyword>
<keyword id="KW-0346">Stress response</keyword>
<keyword id="KW-0804">Transcription</keyword>
<keyword id="KW-0805">Transcription regulation</keyword>
<comment type="function">
    <text evidence="1">Negative regulator of class I heat shock genes (grpE-dnaK-dnaJ and groELS operons). Prevents heat-shock induction of these operons.</text>
</comment>
<comment type="similarity">
    <text evidence="1">Belongs to the HrcA family.</text>
</comment>
<feature type="chain" id="PRO_1000092791" description="Heat-inducible transcription repressor HrcA">
    <location>
        <begin position="1"/>
        <end position="353"/>
    </location>
</feature>
<evidence type="ECO:0000255" key="1">
    <source>
        <dbReference type="HAMAP-Rule" id="MF_00081"/>
    </source>
</evidence>
<name>HRCA_ANASK</name>
<protein>
    <recommendedName>
        <fullName evidence="1">Heat-inducible transcription repressor HrcA</fullName>
    </recommendedName>
</protein>
<sequence>MASADELDRREREILRALVQDYIHTGEPVASQPLLSRHELEWSPATVRSVMADLEALGFLEKPHASSGRIPTERGYRLFVDTMLKVRPPSVADRDRIERLAQAAPDVSSLIEGTADLLHSLSHHAGVVTTPRPQADPVRQLEFVRLRENRVLVVFVSEAGIVTNKLVQLEFAMEPAELERAAAYLNEKLHARADAAELAALRAAILTDMRADQSALHDLLQKALVLAEQSFAGTGVEKVVMEGESSFLDAPEFSDVQKARALLRGFAEKDRILRVLDRVLTAQEVQIFIGAESEFATVPDVSVVAAPYGRGDRVLGTLAVVGPTRMNYARVIPLVDLTARQISRALAALSEGG</sequence>
<gene>
    <name evidence="1" type="primary">hrcA</name>
    <name type="ordered locus">AnaeK_4466</name>
</gene>
<accession>B4UJT7</accession>
<reference key="1">
    <citation type="submission" date="2008-08" db="EMBL/GenBank/DDBJ databases">
        <title>Complete sequence of Anaeromyxobacter sp. K.</title>
        <authorList>
            <consortium name="US DOE Joint Genome Institute"/>
            <person name="Lucas S."/>
            <person name="Copeland A."/>
            <person name="Lapidus A."/>
            <person name="Glavina del Rio T."/>
            <person name="Dalin E."/>
            <person name="Tice H."/>
            <person name="Bruce D."/>
            <person name="Goodwin L."/>
            <person name="Pitluck S."/>
            <person name="Saunders E."/>
            <person name="Brettin T."/>
            <person name="Detter J.C."/>
            <person name="Han C."/>
            <person name="Larimer F."/>
            <person name="Land M."/>
            <person name="Hauser L."/>
            <person name="Kyrpides N."/>
            <person name="Ovchinnikiva G."/>
            <person name="Beliaev A."/>
        </authorList>
    </citation>
    <scope>NUCLEOTIDE SEQUENCE [LARGE SCALE GENOMIC DNA]</scope>
    <source>
        <strain>K</strain>
    </source>
</reference>
<dbReference type="EMBL" id="CP001131">
    <property type="protein sequence ID" value="ACG75668.1"/>
    <property type="molecule type" value="Genomic_DNA"/>
</dbReference>
<dbReference type="RefSeq" id="WP_012528413.1">
    <property type="nucleotide sequence ID" value="NC_011145.1"/>
</dbReference>
<dbReference type="SMR" id="B4UJT7"/>
<dbReference type="KEGG" id="ank:AnaeK_4466"/>
<dbReference type="HOGENOM" id="CLU_050019_0_0_7"/>
<dbReference type="OrthoDB" id="9783139at2"/>
<dbReference type="Proteomes" id="UP000001871">
    <property type="component" value="Chromosome"/>
</dbReference>
<dbReference type="GO" id="GO:0003677">
    <property type="term" value="F:DNA binding"/>
    <property type="evidence" value="ECO:0007669"/>
    <property type="project" value="InterPro"/>
</dbReference>
<dbReference type="GO" id="GO:0045892">
    <property type="term" value="P:negative regulation of DNA-templated transcription"/>
    <property type="evidence" value="ECO:0007669"/>
    <property type="project" value="UniProtKB-UniRule"/>
</dbReference>
<dbReference type="Gene3D" id="3.30.450.40">
    <property type="match status" value="1"/>
</dbReference>
<dbReference type="Gene3D" id="3.30.390.60">
    <property type="entry name" value="Heat-inducible transcription repressor hrca homolog, domain 3"/>
    <property type="match status" value="1"/>
</dbReference>
<dbReference type="Gene3D" id="1.10.10.10">
    <property type="entry name" value="Winged helix-like DNA-binding domain superfamily/Winged helix DNA-binding domain"/>
    <property type="match status" value="1"/>
</dbReference>
<dbReference type="HAMAP" id="MF_00081">
    <property type="entry name" value="HrcA"/>
    <property type="match status" value="1"/>
</dbReference>
<dbReference type="InterPro" id="IPR029016">
    <property type="entry name" value="GAF-like_dom_sf"/>
</dbReference>
<dbReference type="InterPro" id="IPR002571">
    <property type="entry name" value="HrcA"/>
</dbReference>
<dbReference type="InterPro" id="IPR021153">
    <property type="entry name" value="HrcA_C"/>
</dbReference>
<dbReference type="InterPro" id="IPR036388">
    <property type="entry name" value="WH-like_DNA-bd_sf"/>
</dbReference>
<dbReference type="InterPro" id="IPR036390">
    <property type="entry name" value="WH_DNA-bd_sf"/>
</dbReference>
<dbReference type="InterPro" id="IPR005104">
    <property type="entry name" value="WHTH_HrcA_DNA-bd"/>
</dbReference>
<dbReference type="InterPro" id="IPR023120">
    <property type="entry name" value="WHTH_transcript_rep_HrcA_IDD"/>
</dbReference>
<dbReference type="NCBIfam" id="TIGR00331">
    <property type="entry name" value="hrcA"/>
    <property type="match status" value="1"/>
</dbReference>
<dbReference type="PANTHER" id="PTHR34824">
    <property type="entry name" value="HEAT-INDUCIBLE TRANSCRIPTION REPRESSOR HRCA"/>
    <property type="match status" value="1"/>
</dbReference>
<dbReference type="PANTHER" id="PTHR34824:SF1">
    <property type="entry name" value="HEAT-INDUCIBLE TRANSCRIPTION REPRESSOR HRCA"/>
    <property type="match status" value="1"/>
</dbReference>
<dbReference type="Pfam" id="PF01628">
    <property type="entry name" value="HrcA"/>
    <property type="match status" value="1"/>
</dbReference>
<dbReference type="Pfam" id="PF03444">
    <property type="entry name" value="HrcA_DNA-bdg"/>
    <property type="match status" value="1"/>
</dbReference>
<dbReference type="PIRSF" id="PIRSF005485">
    <property type="entry name" value="HrcA"/>
    <property type="match status" value="1"/>
</dbReference>
<dbReference type="SUPFAM" id="SSF55781">
    <property type="entry name" value="GAF domain-like"/>
    <property type="match status" value="1"/>
</dbReference>
<dbReference type="SUPFAM" id="SSF46785">
    <property type="entry name" value="Winged helix' DNA-binding domain"/>
    <property type="match status" value="1"/>
</dbReference>
<organism>
    <name type="scientific">Anaeromyxobacter sp. (strain K)</name>
    <dbReference type="NCBI Taxonomy" id="447217"/>
    <lineage>
        <taxon>Bacteria</taxon>
        <taxon>Pseudomonadati</taxon>
        <taxon>Myxococcota</taxon>
        <taxon>Myxococcia</taxon>
        <taxon>Myxococcales</taxon>
        <taxon>Cystobacterineae</taxon>
        <taxon>Anaeromyxobacteraceae</taxon>
        <taxon>Anaeromyxobacter</taxon>
    </lineage>
</organism>
<proteinExistence type="inferred from homology"/>